<gene>
    <name evidence="1" type="primary">minE</name>
    <name type="ordered locus">BPSL2595</name>
</gene>
<sequence>MSILSFLLGEKKKSAAVAKERLQLIIAHERVGGRPPADYLPALQKELVAVISKYVKISNDDIRVSLERQDDLEVLEVKIEIPQA</sequence>
<organism>
    <name type="scientific">Burkholderia pseudomallei (strain K96243)</name>
    <dbReference type="NCBI Taxonomy" id="272560"/>
    <lineage>
        <taxon>Bacteria</taxon>
        <taxon>Pseudomonadati</taxon>
        <taxon>Pseudomonadota</taxon>
        <taxon>Betaproteobacteria</taxon>
        <taxon>Burkholderiales</taxon>
        <taxon>Burkholderiaceae</taxon>
        <taxon>Burkholderia</taxon>
        <taxon>pseudomallei group</taxon>
    </lineage>
</organism>
<reference key="1">
    <citation type="journal article" date="2004" name="Proc. Natl. Acad. Sci. U.S.A.">
        <title>Genomic plasticity of the causative agent of melioidosis, Burkholderia pseudomallei.</title>
        <authorList>
            <person name="Holden M.T.G."/>
            <person name="Titball R.W."/>
            <person name="Peacock S.J."/>
            <person name="Cerdeno-Tarraga A.-M."/>
            <person name="Atkins T."/>
            <person name="Crossman L.C."/>
            <person name="Pitt T."/>
            <person name="Churcher C."/>
            <person name="Mungall K.L."/>
            <person name="Bentley S.D."/>
            <person name="Sebaihia M."/>
            <person name="Thomson N.R."/>
            <person name="Bason N."/>
            <person name="Beacham I.R."/>
            <person name="Brooks K."/>
            <person name="Brown K.A."/>
            <person name="Brown N.F."/>
            <person name="Challis G.L."/>
            <person name="Cherevach I."/>
            <person name="Chillingworth T."/>
            <person name="Cronin A."/>
            <person name="Crossett B."/>
            <person name="Davis P."/>
            <person name="DeShazer D."/>
            <person name="Feltwell T."/>
            <person name="Fraser A."/>
            <person name="Hance Z."/>
            <person name="Hauser H."/>
            <person name="Holroyd S."/>
            <person name="Jagels K."/>
            <person name="Keith K.E."/>
            <person name="Maddison M."/>
            <person name="Moule S."/>
            <person name="Price C."/>
            <person name="Quail M.A."/>
            <person name="Rabbinowitsch E."/>
            <person name="Rutherford K."/>
            <person name="Sanders M."/>
            <person name="Simmonds M."/>
            <person name="Songsivilai S."/>
            <person name="Stevens K."/>
            <person name="Tumapa S."/>
            <person name="Vesaratchavest M."/>
            <person name="Whitehead S."/>
            <person name="Yeats C."/>
            <person name="Barrell B.G."/>
            <person name="Oyston P.C.F."/>
            <person name="Parkhill J."/>
        </authorList>
    </citation>
    <scope>NUCLEOTIDE SEQUENCE [LARGE SCALE GENOMIC DNA]</scope>
    <source>
        <strain>K96243</strain>
    </source>
</reference>
<accession>Q63RS6</accession>
<keyword id="KW-0131">Cell cycle</keyword>
<keyword id="KW-0132">Cell division</keyword>
<keyword id="KW-1185">Reference proteome</keyword>
<proteinExistence type="inferred from homology"/>
<feature type="chain" id="PRO_0000298090" description="Cell division topological specificity factor">
    <location>
        <begin position="1"/>
        <end position="84"/>
    </location>
</feature>
<name>MINE_BURPS</name>
<comment type="function">
    <text evidence="1">Prevents the cell division inhibition by proteins MinC and MinD at internal division sites while permitting inhibition at polar sites. This ensures cell division at the proper site by restricting the formation of a division septum at the midpoint of the long axis of the cell.</text>
</comment>
<comment type="similarity">
    <text evidence="1">Belongs to the MinE family.</text>
</comment>
<evidence type="ECO:0000255" key="1">
    <source>
        <dbReference type="HAMAP-Rule" id="MF_00262"/>
    </source>
</evidence>
<dbReference type="EMBL" id="BX571965">
    <property type="protein sequence ID" value="CAH36603.1"/>
    <property type="molecule type" value="Genomic_DNA"/>
</dbReference>
<dbReference type="RefSeq" id="WP_004186076.1">
    <property type="nucleotide sequence ID" value="NZ_CP009538.1"/>
</dbReference>
<dbReference type="RefSeq" id="YP_109191.1">
    <property type="nucleotide sequence ID" value="NC_006350.1"/>
</dbReference>
<dbReference type="SMR" id="Q63RS6"/>
<dbReference type="STRING" id="272560.BPSL2595"/>
<dbReference type="GeneID" id="93061170"/>
<dbReference type="KEGG" id="bps:BPSL2595"/>
<dbReference type="PATRIC" id="fig|272560.51.peg.2762"/>
<dbReference type="eggNOG" id="COG0851">
    <property type="taxonomic scope" value="Bacteria"/>
</dbReference>
<dbReference type="Proteomes" id="UP000000605">
    <property type="component" value="Chromosome 1"/>
</dbReference>
<dbReference type="GO" id="GO:0051301">
    <property type="term" value="P:cell division"/>
    <property type="evidence" value="ECO:0007669"/>
    <property type="project" value="UniProtKB-KW"/>
</dbReference>
<dbReference type="GO" id="GO:0032955">
    <property type="term" value="P:regulation of division septum assembly"/>
    <property type="evidence" value="ECO:0007669"/>
    <property type="project" value="InterPro"/>
</dbReference>
<dbReference type="FunFam" id="3.30.1070.10:FF:000001">
    <property type="entry name" value="Cell division topological specificity factor"/>
    <property type="match status" value="1"/>
</dbReference>
<dbReference type="Gene3D" id="3.30.1070.10">
    <property type="entry name" value="Cell division topological specificity factor MinE"/>
    <property type="match status" value="1"/>
</dbReference>
<dbReference type="HAMAP" id="MF_00262">
    <property type="entry name" value="MinE"/>
    <property type="match status" value="1"/>
</dbReference>
<dbReference type="InterPro" id="IPR005527">
    <property type="entry name" value="MinE"/>
</dbReference>
<dbReference type="InterPro" id="IPR036707">
    <property type="entry name" value="MinE_sf"/>
</dbReference>
<dbReference type="NCBIfam" id="TIGR01215">
    <property type="entry name" value="minE"/>
    <property type="match status" value="1"/>
</dbReference>
<dbReference type="NCBIfam" id="NF001422">
    <property type="entry name" value="PRK00296.1"/>
    <property type="match status" value="1"/>
</dbReference>
<dbReference type="NCBIfam" id="NF010595">
    <property type="entry name" value="PRK13989.1"/>
    <property type="match status" value="1"/>
</dbReference>
<dbReference type="Pfam" id="PF03776">
    <property type="entry name" value="MinE"/>
    <property type="match status" value="1"/>
</dbReference>
<dbReference type="SUPFAM" id="SSF55229">
    <property type="entry name" value="Cell division protein MinE topological specificity domain"/>
    <property type="match status" value="1"/>
</dbReference>
<protein>
    <recommendedName>
        <fullName evidence="1">Cell division topological specificity factor</fullName>
    </recommendedName>
</protein>